<keyword id="KW-0027">Amidation</keyword>
<keyword id="KW-0903">Direct protein sequencing</keyword>
<keyword id="KW-0527">Neuropeptide</keyword>
<keyword id="KW-0964">Secreted</keyword>
<comment type="function">
    <text evidence="4">Mediates visceral muscle contractile activity (myotropic activity).</text>
</comment>
<comment type="subcellular location">
    <subcellularLocation>
        <location evidence="2">Secreted</location>
    </subcellularLocation>
</comment>
<comment type="tissue specificity">
    <text evidence="2">Abdominal perisympathetic organs.</text>
</comment>
<comment type="mass spectrometry" mass="1159.6" method="MALDI" evidence="2">
    <molecule>Periviscerokinin-2.1</molecule>
</comment>
<comment type="mass spectrometry" mass="1102.6" method="MALDI" evidence="2">
    <molecule>Periviscerokinin-2.2</molecule>
</comment>
<comment type="similarity">
    <text evidence="1">Belongs to the periviscerokinin family.</text>
</comment>
<protein>
    <recommendedName>
        <fullName>Periviscerokinin-2.1</fullName>
        <shortName>PVK-2.1</shortName>
    </recommendedName>
    <alternativeName>
        <fullName>Periviscerokinin-3</fullName>
        <shortName>PseFo-PVK-3</shortName>
    </alternativeName>
    <component>
        <recommendedName>
            <fullName>Periviscerokinin-2.2</fullName>
            <shortName>PVK-2.2</shortName>
        </recommendedName>
        <alternativeName>
            <fullName>Periviscerokinin-2</fullName>
            <shortName>PseFo-PVK-2</shortName>
        </alternativeName>
    </component>
</protein>
<dbReference type="GO" id="GO:0005576">
    <property type="term" value="C:extracellular region"/>
    <property type="evidence" value="ECO:0007669"/>
    <property type="project" value="UniProtKB-SubCell"/>
</dbReference>
<dbReference type="GO" id="GO:0007218">
    <property type="term" value="P:neuropeptide signaling pathway"/>
    <property type="evidence" value="ECO:0007669"/>
    <property type="project" value="UniProtKB-KW"/>
</dbReference>
<dbReference type="InterPro" id="IPR013231">
    <property type="entry name" value="Periviscerokinin"/>
</dbReference>
<dbReference type="Pfam" id="PF08259">
    <property type="entry name" value="Periviscerokin"/>
    <property type="match status" value="1"/>
</dbReference>
<name>PVK2_PSEFO</name>
<accession>P84376</accession>
<accession>P84433</accession>
<feature type="peptide" id="PRO_0000023627" description="Periviscerokinin-2.1">
    <location>
        <begin position="1"/>
        <end position="12"/>
    </location>
</feature>
<feature type="peptide" id="PRO_0000023628" description="Periviscerokinin-2.2">
    <location>
        <begin position="2"/>
        <end position="12"/>
    </location>
</feature>
<feature type="modified residue" description="Valine amide" evidence="2 3">
    <location>
        <position position="12"/>
    </location>
</feature>
<sequence length="12" mass="1160">GGSSGLISMPRV</sequence>
<proteinExistence type="evidence at protein level"/>
<reference evidence="4" key="1">
    <citation type="journal article" date="2005" name="Peptides">
        <title>Peptidomics of neurohemal organs from species of the cockroach family Blattidae: how do neuropeptides of closely related species differ?</title>
        <authorList>
            <person name="Predel R."/>
            <person name="Gaede G."/>
        </authorList>
    </citation>
    <scope>PROTEIN SEQUENCE</scope>
    <scope>SUBCELLULAR LOCATION</scope>
    <scope>TISSUE SPECIFICITY</scope>
    <scope>MASS SPECTROMETRY</scope>
    <scope>AMIDATION AT VAL-12</scope>
    <source>
        <tissue evidence="2">Abdominal perisympathetic organs</tissue>
    </source>
</reference>
<reference key="2">
    <citation type="journal article" date="2009" name="BMC Evol. Biol.">
        <title>A proteomic approach for studying insect phylogeny: CAPA peptides of ancient insect taxa (Dictyoptera, Blattoptera) as a test case.</title>
        <authorList>
            <person name="Roth S."/>
            <person name="Fromm B."/>
            <person name="Gaede G."/>
            <person name="Predel R."/>
        </authorList>
    </citation>
    <scope>PROTEIN SEQUENCE</scope>
    <scope>AMIDATION AT VAL-12</scope>
    <source>
        <tissue>Abdominal perisympathetic organs</tissue>
    </source>
</reference>
<evidence type="ECO:0000255" key="1"/>
<evidence type="ECO:0000269" key="2">
    <source>
    </source>
</evidence>
<evidence type="ECO:0000269" key="3">
    <source>
    </source>
</evidence>
<evidence type="ECO:0000305" key="4"/>
<organism>
    <name type="scientific">Pseudoderopeltis foveolata</name>
    <name type="common">Cockroach</name>
    <dbReference type="NCBI Taxonomy" id="303879"/>
    <lineage>
        <taxon>Eukaryota</taxon>
        <taxon>Metazoa</taxon>
        <taxon>Ecdysozoa</taxon>
        <taxon>Arthropoda</taxon>
        <taxon>Hexapoda</taxon>
        <taxon>Insecta</taxon>
        <taxon>Pterygota</taxon>
        <taxon>Neoptera</taxon>
        <taxon>Polyneoptera</taxon>
        <taxon>Dictyoptera</taxon>
        <taxon>Blattodea</taxon>
        <taxon>Blattoidea</taxon>
        <taxon>Blattidae</taxon>
        <taxon>Blattinae</taxon>
        <taxon>Pseudoderopeltis</taxon>
    </lineage>
</organism>